<keyword id="KW-0472">Membrane</keyword>
<keyword id="KW-0812">Transmembrane</keyword>
<keyword id="KW-1133">Transmembrane helix</keyword>
<protein>
    <recommendedName>
        <fullName>Putative uncharacterized protein YNL174W</fullName>
    </recommendedName>
</protein>
<feature type="chain" id="PRO_0000203408" description="Putative uncharacterized protein YNL174W">
    <location>
        <begin position="1"/>
        <end position="190"/>
    </location>
</feature>
<feature type="transmembrane region" description="Helical" evidence="1">
    <location>
        <begin position="15"/>
        <end position="35"/>
    </location>
</feature>
<feature type="transmembrane region" description="Helical" evidence="1">
    <location>
        <begin position="58"/>
        <end position="78"/>
    </location>
</feature>
<feature type="transmembrane region" description="Helical" evidence="1">
    <location>
        <begin position="94"/>
        <end position="114"/>
    </location>
</feature>
<feature type="transmembrane region" description="Helical" evidence="1">
    <location>
        <begin position="148"/>
        <end position="168"/>
    </location>
</feature>
<dbReference type="EMBL" id="Z71451">
    <property type="protein sequence ID" value="CAA96067.1"/>
    <property type="molecule type" value="Genomic_DNA"/>
</dbReference>
<dbReference type="PIR" id="S63129">
    <property type="entry name" value="S63129"/>
</dbReference>
<dbReference type="PaxDb" id="4932-YNL174W"/>
<dbReference type="EnsemblFungi" id="YNL174W_mRNA">
    <property type="protein sequence ID" value="YNL174W"/>
    <property type="gene ID" value="YNL174W"/>
</dbReference>
<dbReference type="AGR" id="SGD:S000005118"/>
<dbReference type="SGD" id="S000005118">
    <property type="gene designation" value="YNL174W"/>
</dbReference>
<dbReference type="HOGENOM" id="CLU_1504613_0_0_1"/>
<dbReference type="GO" id="GO:0016020">
    <property type="term" value="C:membrane"/>
    <property type="evidence" value="ECO:0007669"/>
    <property type="project" value="UniProtKB-SubCell"/>
</dbReference>
<accession>P53884</accession>
<evidence type="ECO:0000255" key="1"/>
<evidence type="ECO:0000305" key="2"/>
<evidence type="ECO:0000305" key="3">
    <source>
    </source>
</evidence>
<comment type="subcellular location">
    <subcellularLocation>
        <location evidence="2">Membrane</location>
        <topology evidence="2">Multi-pass membrane protein</topology>
    </subcellularLocation>
</comment>
<comment type="miscellaneous">
    <text evidence="2">Almost completely overlaps NOP13.</text>
</comment>
<comment type="caution">
    <text evidence="3">Product of a dubious gene prediction unlikely to encode a functional protein. Because of that it is not part of the S.cerevisiae S288c complete/reference proteome set.</text>
</comment>
<reference key="1">
    <citation type="journal article" date="1997" name="Nature">
        <title>The nucleotide sequence of Saccharomyces cerevisiae chromosome XIV and its evolutionary implications.</title>
        <authorList>
            <person name="Philippsen P."/>
            <person name="Kleine K."/>
            <person name="Poehlmann R."/>
            <person name="Duesterhoeft A."/>
            <person name="Hamberg K."/>
            <person name="Hegemann J.H."/>
            <person name="Obermaier B."/>
            <person name="Urrestarazu L.A."/>
            <person name="Aert R."/>
            <person name="Albermann K."/>
            <person name="Altmann R."/>
            <person name="Andre B."/>
            <person name="Baladron V."/>
            <person name="Ballesta J.P.G."/>
            <person name="Becam A.-M."/>
            <person name="Beinhauer J.D."/>
            <person name="Boskovic J."/>
            <person name="Buitrago M.J."/>
            <person name="Bussereau F."/>
            <person name="Coster F."/>
            <person name="Crouzet M."/>
            <person name="D'Angelo M."/>
            <person name="Dal Pero F."/>
            <person name="De Antoni A."/>
            <person name="del Rey F."/>
            <person name="Doignon F."/>
            <person name="Domdey H."/>
            <person name="Dubois E."/>
            <person name="Fiedler T.A."/>
            <person name="Fleig U."/>
            <person name="Floeth M."/>
            <person name="Fritz C."/>
            <person name="Gaillardin C."/>
            <person name="Garcia-Cantalejo J.M."/>
            <person name="Glansdorff N."/>
            <person name="Goffeau A."/>
            <person name="Gueldener U."/>
            <person name="Herbert C.J."/>
            <person name="Heumann K."/>
            <person name="Heuss-Neitzel D."/>
            <person name="Hilbert H."/>
            <person name="Hinni K."/>
            <person name="Iraqui Houssaini I."/>
            <person name="Jacquet M."/>
            <person name="Jimenez A."/>
            <person name="Jonniaux J.-L."/>
            <person name="Karpfinger-Hartl L."/>
            <person name="Lanfranchi G."/>
            <person name="Lepingle A."/>
            <person name="Levesque H."/>
            <person name="Lyck R."/>
            <person name="Maftahi M."/>
            <person name="Mallet L."/>
            <person name="Maurer C.T.C."/>
            <person name="Messenguy F."/>
            <person name="Mewes H.-W."/>
            <person name="Moestl D."/>
            <person name="Nasr F."/>
            <person name="Nicaud J.-M."/>
            <person name="Niedenthal R.K."/>
            <person name="Pandolfo D."/>
            <person name="Pierard A."/>
            <person name="Piravandi E."/>
            <person name="Planta R.J."/>
            <person name="Pohl T.M."/>
            <person name="Purnelle B."/>
            <person name="Rebischung C."/>
            <person name="Remacha M.A."/>
            <person name="Revuelta J.L."/>
            <person name="Rinke M."/>
            <person name="Saiz J.E."/>
            <person name="Sartorello F."/>
            <person name="Scherens B."/>
            <person name="Sen-Gupta M."/>
            <person name="Soler-Mira A."/>
            <person name="Urbanus J.H.M."/>
            <person name="Valle G."/>
            <person name="Van Dyck L."/>
            <person name="Verhasselt P."/>
            <person name="Vierendeels F."/>
            <person name="Vissers S."/>
            <person name="Voet M."/>
            <person name="Volckaert G."/>
            <person name="Wach A."/>
            <person name="Wambutt R."/>
            <person name="Wedler H."/>
            <person name="Zollner A."/>
            <person name="Hani J."/>
        </authorList>
    </citation>
    <scope>NUCLEOTIDE SEQUENCE [LARGE SCALE GENOMIC DNA]</scope>
    <source>
        <strain>ATCC 204508 / S288c</strain>
    </source>
</reference>
<reference key="2">
    <citation type="journal article" date="2014" name="G3 (Bethesda)">
        <title>The reference genome sequence of Saccharomyces cerevisiae: Then and now.</title>
        <authorList>
            <person name="Engel S.R."/>
            <person name="Dietrich F.S."/>
            <person name="Fisk D.G."/>
            <person name="Binkley G."/>
            <person name="Balakrishnan R."/>
            <person name="Costanzo M.C."/>
            <person name="Dwight S.S."/>
            <person name="Hitz B.C."/>
            <person name="Karra K."/>
            <person name="Nash R.S."/>
            <person name="Weng S."/>
            <person name="Wong E.D."/>
            <person name="Lloyd P."/>
            <person name="Skrzypek M.S."/>
            <person name="Miyasato S.R."/>
            <person name="Simison M."/>
            <person name="Cherry J.M."/>
        </authorList>
    </citation>
    <scope>GENOME REANNOTATION</scope>
    <source>
        <strain>ATCC 204508 / S288c</strain>
    </source>
</reference>
<sequence length="190" mass="20959">MALEFLAATRGMDNLVMSCSVTLLFSSSLSFVLAIKNLTKSSFVVSKDKLPIQTPYLFSSFFFFFTTSPDSSPVGVLIVDSSPWASFSEAPDFFFSASSLYSSIDLGSILYFAFNSSRVTLPLLKRRFCFFDRGMELFRSISISSSAFLFFVGSSKAFLTCSSLSFFVTASSFDSSVSDILSQIIESCWV</sequence>
<proteinExistence type="uncertain"/>
<name>YNR4_YEAST</name>
<gene>
    <name type="ordered locus">YNL174W</name>
    <name type="ORF">N1669</name>
</gene>
<organism>
    <name type="scientific">Saccharomyces cerevisiae (strain ATCC 204508 / S288c)</name>
    <name type="common">Baker's yeast</name>
    <dbReference type="NCBI Taxonomy" id="559292"/>
    <lineage>
        <taxon>Eukaryota</taxon>
        <taxon>Fungi</taxon>
        <taxon>Dikarya</taxon>
        <taxon>Ascomycota</taxon>
        <taxon>Saccharomycotina</taxon>
        <taxon>Saccharomycetes</taxon>
        <taxon>Saccharomycetales</taxon>
        <taxon>Saccharomycetaceae</taxon>
        <taxon>Saccharomyces</taxon>
    </lineage>
</organism>